<proteinExistence type="inferred from homology"/>
<dbReference type="EC" id="6.1.1.16" evidence="1"/>
<dbReference type="EMBL" id="CP000148">
    <property type="protein sequence ID" value="ABB30306.1"/>
    <property type="molecule type" value="Genomic_DNA"/>
</dbReference>
<dbReference type="RefSeq" id="WP_004514181.1">
    <property type="nucleotide sequence ID" value="NC_007517.1"/>
</dbReference>
<dbReference type="SMR" id="Q39ZL8"/>
<dbReference type="STRING" id="269799.Gmet_0057"/>
<dbReference type="KEGG" id="gme:Gmet_0057"/>
<dbReference type="eggNOG" id="COG0215">
    <property type="taxonomic scope" value="Bacteria"/>
</dbReference>
<dbReference type="HOGENOM" id="CLU_013528_0_1_7"/>
<dbReference type="Proteomes" id="UP000007073">
    <property type="component" value="Chromosome"/>
</dbReference>
<dbReference type="GO" id="GO:0005829">
    <property type="term" value="C:cytosol"/>
    <property type="evidence" value="ECO:0007669"/>
    <property type="project" value="TreeGrafter"/>
</dbReference>
<dbReference type="GO" id="GO:0005524">
    <property type="term" value="F:ATP binding"/>
    <property type="evidence" value="ECO:0007669"/>
    <property type="project" value="UniProtKB-UniRule"/>
</dbReference>
<dbReference type="GO" id="GO:0004817">
    <property type="term" value="F:cysteine-tRNA ligase activity"/>
    <property type="evidence" value="ECO:0007669"/>
    <property type="project" value="UniProtKB-UniRule"/>
</dbReference>
<dbReference type="GO" id="GO:0008270">
    <property type="term" value="F:zinc ion binding"/>
    <property type="evidence" value="ECO:0007669"/>
    <property type="project" value="UniProtKB-UniRule"/>
</dbReference>
<dbReference type="GO" id="GO:0006423">
    <property type="term" value="P:cysteinyl-tRNA aminoacylation"/>
    <property type="evidence" value="ECO:0007669"/>
    <property type="project" value="UniProtKB-UniRule"/>
</dbReference>
<dbReference type="CDD" id="cd07963">
    <property type="entry name" value="Anticodon_Ia_Cys"/>
    <property type="match status" value="1"/>
</dbReference>
<dbReference type="CDD" id="cd00672">
    <property type="entry name" value="CysRS_core"/>
    <property type="match status" value="1"/>
</dbReference>
<dbReference type="FunFam" id="3.40.50.620:FF:000009">
    <property type="entry name" value="Cysteine--tRNA ligase"/>
    <property type="match status" value="1"/>
</dbReference>
<dbReference type="Gene3D" id="1.20.120.1910">
    <property type="entry name" value="Cysteine-tRNA ligase, C-terminal anti-codon recognition domain"/>
    <property type="match status" value="1"/>
</dbReference>
<dbReference type="Gene3D" id="3.40.50.620">
    <property type="entry name" value="HUPs"/>
    <property type="match status" value="1"/>
</dbReference>
<dbReference type="HAMAP" id="MF_00041">
    <property type="entry name" value="Cys_tRNA_synth"/>
    <property type="match status" value="1"/>
</dbReference>
<dbReference type="InterPro" id="IPR015803">
    <property type="entry name" value="Cys-tRNA-ligase"/>
</dbReference>
<dbReference type="InterPro" id="IPR015273">
    <property type="entry name" value="Cys-tRNA-synt_Ia_DALR"/>
</dbReference>
<dbReference type="InterPro" id="IPR024909">
    <property type="entry name" value="Cys-tRNA/MSH_ligase"/>
</dbReference>
<dbReference type="InterPro" id="IPR056411">
    <property type="entry name" value="CysS_C"/>
</dbReference>
<dbReference type="InterPro" id="IPR014729">
    <property type="entry name" value="Rossmann-like_a/b/a_fold"/>
</dbReference>
<dbReference type="InterPro" id="IPR032678">
    <property type="entry name" value="tRNA-synt_1_cat_dom"/>
</dbReference>
<dbReference type="InterPro" id="IPR009080">
    <property type="entry name" value="tRNAsynth_Ia_anticodon-bd"/>
</dbReference>
<dbReference type="NCBIfam" id="TIGR00435">
    <property type="entry name" value="cysS"/>
    <property type="match status" value="1"/>
</dbReference>
<dbReference type="PANTHER" id="PTHR10890:SF3">
    <property type="entry name" value="CYSTEINE--TRNA LIGASE, CYTOPLASMIC"/>
    <property type="match status" value="1"/>
</dbReference>
<dbReference type="PANTHER" id="PTHR10890">
    <property type="entry name" value="CYSTEINYL-TRNA SYNTHETASE"/>
    <property type="match status" value="1"/>
</dbReference>
<dbReference type="Pfam" id="PF23493">
    <property type="entry name" value="CysS_C"/>
    <property type="match status" value="1"/>
</dbReference>
<dbReference type="Pfam" id="PF09190">
    <property type="entry name" value="DALR_2"/>
    <property type="match status" value="1"/>
</dbReference>
<dbReference type="Pfam" id="PF01406">
    <property type="entry name" value="tRNA-synt_1e"/>
    <property type="match status" value="1"/>
</dbReference>
<dbReference type="PRINTS" id="PR00983">
    <property type="entry name" value="TRNASYNTHCYS"/>
</dbReference>
<dbReference type="SMART" id="SM00840">
    <property type="entry name" value="DALR_2"/>
    <property type="match status" value="1"/>
</dbReference>
<dbReference type="SUPFAM" id="SSF47323">
    <property type="entry name" value="Anticodon-binding domain of a subclass of class I aminoacyl-tRNA synthetases"/>
    <property type="match status" value="1"/>
</dbReference>
<dbReference type="SUPFAM" id="SSF52374">
    <property type="entry name" value="Nucleotidylyl transferase"/>
    <property type="match status" value="1"/>
</dbReference>
<protein>
    <recommendedName>
        <fullName evidence="1">Cysteine--tRNA ligase</fullName>
        <ecNumber evidence="1">6.1.1.16</ecNumber>
    </recommendedName>
    <alternativeName>
        <fullName evidence="1">Cysteinyl-tRNA synthetase</fullName>
        <shortName evidence="1">CysRS</shortName>
    </alternativeName>
</protein>
<name>SYC_GEOMG</name>
<gene>
    <name evidence="1" type="primary">cysS</name>
    <name type="ordered locus">Gmet_0057</name>
</gene>
<comment type="catalytic activity">
    <reaction evidence="1">
        <text>tRNA(Cys) + L-cysteine + ATP = L-cysteinyl-tRNA(Cys) + AMP + diphosphate</text>
        <dbReference type="Rhea" id="RHEA:17773"/>
        <dbReference type="Rhea" id="RHEA-COMP:9661"/>
        <dbReference type="Rhea" id="RHEA-COMP:9679"/>
        <dbReference type="ChEBI" id="CHEBI:30616"/>
        <dbReference type="ChEBI" id="CHEBI:33019"/>
        <dbReference type="ChEBI" id="CHEBI:35235"/>
        <dbReference type="ChEBI" id="CHEBI:78442"/>
        <dbReference type="ChEBI" id="CHEBI:78517"/>
        <dbReference type="ChEBI" id="CHEBI:456215"/>
        <dbReference type="EC" id="6.1.1.16"/>
    </reaction>
</comment>
<comment type="cofactor">
    <cofactor evidence="1">
        <name>Zn(2+)</name>
        <dbReference type="ChEBI" id="CHEBI:29105"/>
    </cofactor>
    <text evidence="1">Binds 1 zinc ion per subunit.</text>
</comment>
<comment type="subunit">
    <text evidence="1">Monomer.</text>
</comment>
<comment type="subcellular location">
    <subcellularLocation>
        <location evidence="1">Cytoplasm</location>
    </subcellularLocation>
</comment>
<comment type="similarity">
    <text evidence="1">Belongs to the class-I aminoacyl-tRNA synthetase family.</text>
</comment>
<reference key="1">
    <citation type="journal article" date="2009" name="BMC Microbiol.">
        <title>The genome sequence of Geobacter metallireducens: features of metabolism, physiology and regulation common and dissimilar to Geobacter sulfurreducens.</title>
        <authorList>
            <person name="Aklujkar M."/>
            <person name="Krushkal J."/>
            <person name="DiBartolo G."/>
            <person name="Lapidus A."/>
            <person name="Land M.L."/>
            <person name="Lovley D.R."/>
        </authorList>
    </citation>
    <scope>NUCLEOTIDE SEQUENCE [LARGE SCALE GENOMIC DNA]</scope>
    <source>
        <strain>ATCC 53774 / DSM 7210 / GS-15</strain>
    </source>
</reference>
<evidence type="ECO:0000255" key="1">
    <source>
        <dbReference type="HAMAP-Rule" id="MF_00041"/>
    </source>
</evidence>
<sequence>MSLRVYNTLSGTKEEFTPLVPGRVSMYVCGVTVYDHCHIGHARANVVFDMIYRYLRHAGYDVTYVRNYTDVDDKIINRANQEGVPYNAISERFIAEFDRDMAALGLDLPTHQPKATEHIAEMIDVISRLIEKGFAYAADGDVYFCVEKFDPYLKLSKRNLDEMQAGARIEVGEKKRHPMDFALWKGSKPGEPFWESPWGQGRPGWHIECSAMSMKYLGETFDIHGGGKDLVFPHHENEIAQSEAANGKPFAHYWIHNGFVNINSEKMSKSLGNFFTIKEVLEKYDAEVLRFFLLSAHYRSPIDFSDQNLREAEAGLERIYGTLAGIDENLTKGAEGTAEETDRELAEKAVTFPERFREAMDDDFNTAQALGFVFDLVRSANRVLGEGKGGGSNRALLAEARDRIRKVGAVLGIFTSEPRAFAERLKNRKAAELPITAEEIERLIAERIAARANRDFKRADEIRDSLAAKGIMLLDSPQGTTWKVK</sequence>
<accession>Q39ZL8</accession>
<feature type="chain" id="PRO_0000240916" description="Cysteine--tRNA ligase">
    <location>
        <begin position="1"/>
        <end position="485"/>
    </location>
</feature>
<feature type="short sequence motif" description="'HIGH' region">
    <location>
        <begin position="31"/>
        <end position="41"/>
    </location>
</feature>
<feature type="short sequence motif" description="'KMSKS' region">
    <location>
        <begin position="266"/>
        <end position="270"/>
    </location>
</feature>
<feature type="binding site" evidence="1">
    <location>
        <position position="29"/>
    </location>
    <ligand>
        <name>Zn(2+)</name>
        <dbReference type="ChEBI" id="CHEBI:29105"/>
    </ligand>
</feature>
<feature type="binding site" evidence="1">
    <location>
        <position position="209"/>
    </location>
    <ligand>
        <name>Zn(2+)</name>
        <dbReference type="ChEBI" id="CHEBI:29105"/>
    </ligand>
</feature>
<feature type="binding site" evidence="1">
    <location>
        <position position="234"/>
    </location>
    <ligand>
        <name>Zn(2+)</name>
        <dbReference type="ChEBI" id="CHEBI:29105"/>
    </ligand>
</feature>
<feature type="binding site" evidence="1">
    <location>
        <position position="238"/>
    </location>
    <ligand>
        <name>Zn(2+)</name>
        <dbReference type="ChEBI" id="CHEBI:29105"/>
    </ligand>
</feature>
<feature type="binding site" evidence="1">
    <location>
        <position position="269"/>
    </location>
    <ligand>
        <name>ATP</name>
        <dbReference type="ChEBI" id="CHEBI:30616"/>
    </ligand>
</feature>
<organism>
    <name type="scientific">Geobacter metallireducens (strain ATCC 53774 / DSM 7210 / GS-15)</name>
    <dbReference type="NCBI Taxonomy" id="269799"/>
    <lineage>
        <taxon>Bacteria</taxon>
        <taxon>Pseudomonadati</taxon>
        <taxon>Thermodesulfobacteriota</taxon>
        <taxon>Desulfuromonadia</taxon>
        <taxon>Geobacterales</taxon>
        <taxon>Geobacteraceae</taxon>
        <taxon>Geobacter</taxon>
    </lineage>
</organism>
<keyword id="KW-0030">Aminoacyl-tRNA synthetase</keyword>
<keyword id="KW-0067">ATP-binding</keyword>
<keyword id="KW-0963">Cytoplasm</keyword>
<keyword id="KW-0436">Ligase</keyword>
<keyword id="KW-0479">Metal-binding</keyword>
<keyword id="KW-0547">Nucleotide-binding</keyword>
<keyword id="KW-0648">Protein biosynthesis</keyword>
<keyword id="KW-1185">Reference proteome</keyword>
<keyword id="KW-0862">Zinc</keyword>